<accession>Q0S1P9</accession>
<comment type="function">
    <text evidence="1">Can catalyze the hydrolysis of ATP in the presence of single-stranded DNA, the ATP-dependent uptake of single-stranded DNA by duplex DNA, and the ATP-dependent hybridization of homologous single-stranded DNAs. It interacts with LexA causing its activation and leading to its autocatalytic cleavage.</text>
</comment>
<comment type="subcellular location">
    <subcellularLocation>
        <location evidence="1">Cytoplasm</location>
    </subcellularLocation>
</comment>
<comment type="similarity">
    <text evidence="1">Belongs to the RecA family.</text>
</comment>
<evidence type="ECO:0000255" key="1">
    <source>
        <dbReference type="HAMAP-Rule" id="MF_00268"/>
    </source>
</evidence>
<reference key="1">
    <citation type="journal article" date="2006" name="Proc. Natl. Acad. Sci. U.S.A.">
        <title>The complete genome of Rhodococcus sp. RHA1 provides insights into a catabolic powerhouse.</title>
        <authorList>
            <person name="McLeod M.P."/>
            <person name="Warren R.L."/>
            <person name="Hsiao W.W.L."/>
            <person name="Araki N."/>
            <person name="Myhre M."/>
            <person name="Fernandes C."/>
            <person name="Miyazawa D."/>
            <person name="Wong W."/>
            <person name="Lillquist A.L."/>
            <person name="Wang D."/>
            <person name="Dosanjh M."/>
            <person name="Hara H."/>
            <person name="Petrescu A."/>
            <person name="Morin R.D."/>
            <person name="Yang G."/>
            <person name="Stott J.M."/>
            <person name="Schein J.E."/>
            <person name="Shin H."/>
            <person name="Smailus D."/>
            <person name="Siddiqui A.S."/>
            <person name="Marra M.A."/>
            <person name="Jones S.J.M."/>
            <person name="Holt R."/>
            <person name="Brinkman F.S.L."/>
            <person name="Miyauchi K."/>
            <person name="Fukuda M."/>
            <person name="Davies J.E."/>
            <person name="Mohn W.W."/>
            <person name="Eltis L.D."/>
        </authorList>
    </citation>
    <scope>NUCLEOTIDE SEQUENCE [LARGE SCALE GENOMIC DNA]</scope>
    <source>
        <strain>RHA1</strain>
    </source>
</reference>
<keyword id="KW-0067">ATP-binding</keyword>
<keyword id="KW-0963">Cytoplasm</keyword>
<keyword id="KW-0227">DNA damage</keyword>
<keyword id="KW-0233">DNA recombination</keyword>
<keyword id="KW-0234">DNA repair</keyword>
<keyword id="KW-0238">DNA-binding</keyword>
<keyword id="KW-0547">Nucleotide-binding</keyword>
<keyword id="KW-0742">SOS response</keyword>
<feature type="chain" id="PRO_1000047983" description="Protein RecA">
    <location>
        <begin position="1"/>
        <end position="347"/>
    </location>
</feature>
<feature type="binding site" evidence="1">
    <location>
        <begin position="68"/>
        <end position="75"/>
    </location>
    <ligand>
        <name>ATP</name>
        <dbReference type="ChEBI" id="CHEBI:30616"/>
    </ligand>
</feature>
<name>RECA_RHOJR</name>
<protein>
    <recommendedName>
        <fullName evidence="1">Protein RecA</fullName>
    </recommendedName>
    <alternativeName>
        <fullName evidence="1">Recombinase A</fullName>
    </alternativeName>
</protein>
<dbReference type="EMBL" id="CP000431">
    <property type="protein sequence ID" value="ABG98537.1"/>
    <property type="molecule type" value="Genomic_DNA"/>
</dbReference>
<dbReference type="RefSeq" id="WP_005240749.1">
    <property type="nucleotide sequence ID" value="NC_008268.1"/>
</dbReference>
<dbReference type="SMR" id="Q0S1P9"/>
<dbReference type="GeneID" id="69891100"/>
<dbReference type="KEGG" id="rha:RHA1_ro06765"/>
<dbReference type="eggNOG" id="COG0468">
    <property type="taxonomic scope" value="Bacteria"/>
</dbReference>
<dbReference type="HOGENOM" id="CLU_040469_1_2_11"/>
<dbReference type="OrthoDB" id="9776733at2"/>
<dbReference type="Proteomes" id="UP000008710">
    <property type="component" value="Chromosome"/>
</dbReference>
<dbReference type="GO" id="GO:0005829">
    <property type="term" value="C:cytosol"/>
    <property type="evidence" value="ECO:0007669"/>
    <property type="project" value="TreeGrafter"/>
</dbReference>
<dbReference type="GO" id="GO:0005524">
    <property type="term" value="F:ATP binding"/>
    <property type="evidence" value="ECO:0007669"/>
    <property type="project" value="UniProtKB-UniRule"/>
</dbReference>
<dbReference type="GO" id="GO:0016887">
    <property type="term" value="F:ATP hydrolysis activity"/>
    <property type="evidence" value="ECO:0007669"/>
    <property type="project" value="InterPro"/>
</dbReference>
<dbReference type="GO" id="GO:0140664">
    <property type="term" value="F:ATP-dependent DNA damage sensor activity"/>
    <property type="evidence" value="ECO:0007669"/>
    <property type="project" value="InterPro"/>
</dbReference>
<dbReference type="GO" id="GO:0003684">
    <property type="term" value="F:damaged DNA binding"/>
    <property type="evidence" value="ECO:0007669"/>
    <property type="project" value="UniProtKB-UniRule"/>
</dbReference>
<dbReference type="GO" id="GO:0003697">
    <property type="term" value="F:single-stranded DNA binding"/>
    <property type="evidence" value="ECO:0007669"/>
    <property type="project" value="UniProtKB-UniRule"/>
</dbReference>
<dbReference type="GO" id="GO:0006310">
    <property type="term" value="P:DNA recombination"/>
    <property type="evidence" value="ECO:0007669"/>
    <property type="project" value="UniProtKB-UniRule"/>
</dbReference>
<dbReference type="GO" id="GO:0006281">
    <property type="term" value="P:DNA repair"/>
    <property type="evidence" value="ECO:0007669"/>
    <property type="project" value="UniProtKB-UniRule"/>
</dbReference>
<dbReference type="GO" id="GO:0009432">
    <property type="term" value="P:SOS response"/>
    <property type="evidence" value="ECO:0007669"/>
    <property type="project" value="UniProtKB-UniRule"/>
</dbReference>
<dbReference type="CDD" id="cd00983">
    <property type="entry name" value="RecA"/>
    <property type="match status" value="1"/>
</dbReference>
<dbReference type="FunFam" id="3.40.50.300:FF:002436">
    <property type="entry name" value="Protein RecA"/>
    <property type="match status" value="1"/>
</dbReference>
<dbReference type="Gene3D" id="3.40.50.300">
    <property type="entry name" value="P-loop containing nucleotide triphosphate hydrolases"/>
    <property type="match status" value="1"/>
</dbReference>
<dbReference type="HAMAP" id="MF_00268">
    <property type="entry name" value="RecA"/>
    <property type="match status" value="1"/>
</dbReference>
<dbReference type="InterPro" id="IPR003593">
    <property type="entry name" value="AAA+_ATPase"/>
</dbReference>
<dbReference type="InterPro" id="IPR013765">
    <property type="entry name" value="DNA_recomb/repair_RecA"/>
</dbReference>
<dbReference type="InterPro" id="IPR020584">
    <property type="entry name" value="DNA_recomb/repair_RecA_CS"/>
</dbReference>
<dbReference type="InterPro" id="IPR027417">
    <property type="entry name" value="P-loop_NTPase"/>
</dbReference>
<dbReference type="InterPro" id="IPR049261">
    <property type="entry name" value="RecA-like_C"/>
</dbReference>
<dbReference type="InterPro" id="IPR049428">
    <property type="entry name" value="RecA-like_N"/>
</dbReference>
<dbReference type="InterPro" id="IPR020588">
    <property type="entry name" value="RecA_ATP-bd"/>
</dbReference>
<dbReference type="InterPro" id="IPR023400">
    <property type="entry name" value="RecA_C_sf"/>
</dbReference>
<dbReference type="InterPro" id="IPR020587">
    <property type="entry name" value="RecA_monomer-monomer_interface"/>
</dbReference>
<dbReference type="NCBIfam" id="TIGR02012">
    <property type="entry name" value="tigrfam_recA"/>
    <property type="match status" value="1"/>
</dbReference>
<dbReference type="PANTHER" id="PTHR45900:SF1">
    <property type="entry name" value="MITOCHONDRIAL DNA REPAIR PROTEIN RECA HOMOLOG-RELATED"/>
    <property type="match status" value="1"/>
</dbReference>
<dbReference type="PANTHER" id="PTHR45900">
    <property type="entry name" value="RECA"/>
    <property type="match status" value="1"/>
</dbReference>
<dbReference type="Pfam" id="PF00154">
    <property type="entry name" value="RecA"/>
    <property type="match status" value="1"/>
</dbReference>
<dbReference type="Pfam" id="PF21096">
    <property type="entry name" value="RecA_C"/>
    <property type="match status" value="1"/>
</dbReference>
<dbReference type="PRINTS" id="PR00142">
    <property type="entry name" value="RECA"/>
</dbReference>
<dbReference type="SMART" id="SM00382">
    <property type="entry name" value="AAA"/>
    <property type="match status" value="1"/>
</dbReference>
<dbReference type="SUPFAM" id="SSF52540">
    <property type="entry name" value="P-loop containing nucleoside triphosphate hydrolases"/>
    <property type="match status" value="1"/>
</dbReference>
<dbReference type="SUPFAM" id="SSF54752">
    <property type="entry name" value="RecA protein, C-terminal domain"/>
    <property type="match status" value="1"/>
</dbReference>
<dbReference type="PROSITE" id="PS00321">
    <property type="entry name" value="RECA_1"/>
    <property type="match status" value="1"/>
</dbReference>
<dbReference type="PROSITE" id="PS50162">
    <property type="entry name" value="RECA_2"/>
    <property type="match status" value="1"/>
</dbReference>
<dbReference type="PROSITE" id="PS50163">
    <property type="entry name" value="RECA_3"/>
    <property type="match status" value="1"/>
</dbReference>
<organism>
    <name type="scientific">Rhodococcus jostii (strain RHA1)</name>
    <dbReference type="NCBI Taxonomy" id="101510"/>
    <lineage>
        <taxon>Bacteria</taxon>
        <taxon>Bacillati</taxon>
        <taxon>Actinomycetota</taxon>
        <taxon>Actinomycetes</taxon>
        <taxon>Mycobacteriales</taxon>
        <taxon>Nocardiaceae</taxon>
        <taxon>Rhodococcus</taxon>
    </lineage>
</organism>
<proteinExistence type="inferred from homology"/>
<sequence>MAPQAHDRDKALDLALAQIDKNFGKGSVMRLGEGVRQPIAVIPTGSIALDVALGIGGLPRGRVVEIYGPESSGKTTVALHAVANAQAAGGIAAFIDAEHALDPDYAQKLGVDTDALLVSQPDTGEQALEIADMLIRSGALDILVVDSVAALVPRAEIEGEMGDSHVGLQARLMSQALRKMTGALSNSGTTAIFINQLREKIGVMFGSPETTTGGKALKFYSSVRLDVRRIETLKDGTDAVGNRTRVKVVKNKVAPPFKQAEFDILYGLGISKEGSLIDMGVEHGFIRKSGSWYTYEGDQLGQGKENARKFLLENTDIRDEIEKKIKEKLGIGADVTAATDDAAPVEF</sequence>
<gene>
    <name evidence="1" type="primary">recA</name>
    <name type="ordered locus">RHA1_ro06765</name>
</gene>